<proteinExistence type="inferred from homology"/>
<sequence>MQTQGEASNPLERNIELSVSREKVEAEVGVRLKRLAPKVKVQGFRPGKVPLKIVAQQYGHQVEHEVLGELLQQQFNDAVNQENYRVAGIPGFESRNSDANGATSYEFRATFEIYPDIELGDLSSITVNKPVLQIGDAEIQKTLDILRKQRATYEPTDRPAQTGDRVTIDYRGVLDGEGFPGGQADDYSVILGNGHLLEDFESSILGMTAGQEKTFDMTFPADYPGKDVAGKKVSFTIRLNKLEAPKLPEVDGEFAKSLGVAEGDIDKMRSEIKANLQREISQRIRTKLKEQVMQSLLDKVLIQVPKVLIRQEADRLAEEMQNSRAARGFRKDQSLSGDVFLEKAERRVRLGLILSKLIDTHELSVKPEQVRSFIEEYAQGYENPEQVIKWHYASPERLKEIEPLILEDNAVSWLLDKAKIIDQSVTFDELMGYSHATNV</sequence>
<dbReference type="EC" id="5.2.1.8" evidence="1"/>
<dbReference type="EMBL" id="AL954747">
    <property type="protein sequence ID" value="CAD83941.1"/>
    <property type="molecule type" value="Genomic_DNA"/>
</dbReference>
<dbReference type="RefSeq" id="WP_011110682.1">
    <property type="nucleotide sequence ID" value="NC_004757.1"/>
</dbReference>
<dbReference type="SMR" id="Q82Y58"/>
<dbReference type="STRING" id="228410.NE0030"/>
<dbReference type="GeneID" id="87103238"/>
<dbReference type="KEGG" id="neu:NE0030"/>
<dbReference type="eggNOG" id="COG0544">
    <property type="taxonomic scope" value="Bacteria"/>
</dbReference>
<dbReference type="HOGENOM" id="CLU_033058_2_0_4"/>
<dbReference type="OrthoDB" id="9767721at2"/>
<dbReference type="PhylomeDB" id="Q82Y58"/>
<dbReference type="Proteomes" id="UP000001416">
    <property type="component" value="Chromosome"/>
</dbReference>
<dbReference type="GO" id="GO:0005737">
    <property type="term" value="C:cytoplasm"/>
    <property type="evidence" value="ECO:0007669"/>
    <property type="project" value="UniProtKB-SubCell"/>
</dbReference>
<dbReference type="GO" id="GO:0003755">
    <property type="term" value="F:peptidyl-prolyl cis-trans isomerase activity"/>
    <property type="evidence" value="ECO:0007669"/>
    <property type="project" value="UniProtKB-UniRule"/>
</dbReference>
<dbReference type="GO" id="GO:0044183">
    <property type="term" value="F:protein folding chaperone"/>
    <property type="evidence" value="ECO:0007669"/>
    <property type="project" value="TreeGrafter"/>
</dbReference>
<dbReference type="GO" id="GO:0043022">
    <property type="term" value="F:ribosome binding"/>
    <property type="evidence" value="ECO:0007669"/>
    <property type="project" value="TreeGrafter"/>
</dbReference>
<dbReference type="GO" id="GO:0051083">
    <property type="term" value="P:'de novo' cotranslational protein folding"/>
    <property type="evidence" value="ECO:0007669"/>
    <property type="project" value="TreeGrafter"/>
</dbReference>
<dbReference type="GO" id="GO:0051301">
    <property type="term" value="P:cell division"/>
    <property type="evidence" value="ECO:0007669"/>
    <property type="project" value="UniProtKB-KW"/>
</dbReference>
<dbReference type="GO" id="GO:0061077">
    <property type="term" value="P:chaperone-mediated protein folding"/>
    <property type="evidence" value="ECO:0007669"/>
    <property type="project" value="TreeGrafter"/>
</dbReference>
<dbReference type="GO" id="GO:0015031">
    <property type="term" value="P:protein transport"/>
    <property type="evidence" value="ECO:0007669"/>
    <property type="project" value="UniProtKB-UniRule"/>
</dbReference>
<dbReference type="GO" id="GO:0043335">
    <property type="term" value="P:protein unfolding"/>
    <property type="evidence" value="ECO:0007669"/>
    <property type="project" value="TreeGrafter"/>
</dbReference>
<dbReference type="FunFam" id="3.10.50.40:FF:000001">
    <property type="entry name" value="Trigger factor"/>
    <property type="match status" value="1"/>
</dbReference>
<dbReference type="Gene3D" id="3.10.50.40">
    <property type="match status" value="1"/>
</dbReference>
<dbReference type="Gene3D" id="3.30.70.1050">
    <property type="entry name" value="Trigger factor ribosome-binding domain"/>
    <property type="match status" value="1"/>
</dbReference>
<dbReference type="Gene3D" id="1.10.3120.10">
    <property type="entry name" value="Trigger factor, C-terminal domain"/>
    <property type="match status" value="1"/>
</dbReference>
<dbReference type="HAMAP" id="MF_00303">
    <property type="entry name" value="Trigger_factor_Tig"/>
    <property type="match status" value="1"/>
</dbReference>
<dbReference type="InterPro" id="IPR046357">
    <property type="entry name" value="PPIase_dom_sf"/>
</dbReference>
<dbReference type="InterPro" id="IPR001179">
    <property type="entry name" value="PPIase_FKBP_dom"/>
</dbReference>
<dbReference type="InterPro" id="IPR005215">
    <property type="entry name" value="Trig_fac"/>
</dbReference>
<dbReference type="InterPro" id="IPR008880">
    <property type="entry name" value="Trigger_fac_C"/>
</dbReference>
<dbReference type="InterPro" id="IPR037041">
    <property type="entry name" value="Trigger_fac_C_sf"/>
</dbReference>
<dbReference type="InterPro" id="IPR008881">
    <property type="entry name" value="Trigger_fac_ribosome-bd_bac"/>
</dbReference>
<dbReference type="InterPro" id="IPR036611">
    <property type="entry name" value="Trigger_fac_ribosome-bd_sf"/>
</dbReference>
<dbReference type="InterPro" id="IPR027304">
    <property type="entry name" value="Trigger_fact/SurA_dom_sf"/>
</dbReference>
<dbReference type="NCBIfam" id="TIGR00115">
    <property type="entry name" value="tig"/>
    <property type="match status" value="1"/>
</dbReference>
<dbReference type="PANTHER" id="PTHR30560">
    <property type="entry name" value="TRIGGER FACTOR CHAPERONE AND PEPTIDYL-PROLYL CIS/TRANS ISOMERASE"/>
    <property type="match status" value="1"/>
</dbReference>
<dbReference type="PANTHER" id="PTHR30560:SF3">
    <property type="entry name" value="TRIGGER FACTOR-LIKE PROTEIN TIG, CHLOROPLASTIC"/>
    <property type="match status" value="1"/>
</dbReference>
<dbReference type="Pfam" id="PF00254">
    <property type="entry name" value="FKBP_C"/>
    <property type="match status" value="1"/>
</dbReference>
<dbReference type="Pfam" id="PF05698">
    <property type="entry name" value="Trigger_C"/>
    <property type="match status" value="1"/>
</dbReference>
<dbReference type="Pfam" id="PF05697">
    <property type="entry name" value="Trigger_N"/>
    <property type="match status" value="1"/>
</dbReference>
<dbReference type="PIRSF" id="PIRSF003095">
    <property type="entry name" value="Trigger_factor"/>
    <property type="match status" value="1"/>
</dbReference>
<dbReference type="SUPFAM" id="SSF54534">
    <property type="entry name" value="FKBP-like"/>
    <property type="match status" value="1"/>
</dbReference>
<dbReference type="SUPFAM" id="SSF109998">
    <property type="entry name" value="Triger factor/SurA peptide-binding domain-like"/>
    <property type="match status" value="1"/>
</dbReference>
<dbReference type="SUPFAM" id="SSF102735">
    <property type="entry name" value="Trigger factor ribosome-binding domain"/>
    <property type="match status" value="1"/>
</dbReference>
<dbReference type="PROSITE" id="PS50059">
    <property type="entry name" value="FKBP_PPIASE"/>
    <property type="match status" value="1"/>
</dbReference>
<feature type="chain" id="PRO_0000179395" description="Trigger factor">
    <location>
        <begin position="1"/>
        <end position="439"/>
    </location>
</feature>
<feature type="domain" description="PPIase FKBP-type" evidence="1">
    <location>
        <begin position="163"/>
        <end position="248"/>
    </location>
</feature>
<reference key="1">
    <citation type="journal article" date="2003" name="J. Bacteriol.">
        <title>Complete genome sequence of the ammonia-oxidizing bacterium and obligate chemolithoautotroph Nitrosomonas europaea.</title>
        <authorList>
            <person name="Chain P."/>
            <person name="Lamerdin J.E."/>
            <person name="Larimer F.W."/>
            <person name="Regala W."/>
            <person name="Lao V."/>
            <person name="Land M.L."/>
            <person name="Hauser L."/>
            <person name="Hooper A.B."/>
            <person name="Klotz M.G."/>
            <person name="Norton J."/>
            <person name="Sayavedra-Soto L.A."/>
            <person name="Arciero D.M."/>
            <person name="Hommes N.G."/>
            <person name="Whittaker M.M."/>
            <person name="Arp D.J."/>
        </authorList>
    </citation>
    <scope>NUCLEOTIDE SEQUENCE [LARGE SCALE GENOMIC DNA]</scope>
    <source>
        <strain>ATCC 19718 / CIP 103999 / KCTC 2705 / NBRC 14298</strain>
    </source>
</reference>
<comment type="function">
    <text evidence="1">Involved in protein export. Acts as a chaperone by maintaining the newly synthesized protein in an open conformation. Functions as a peptidyl-prolyl cis-trans isomerase.</text>
</comment>
<comment type="catalytic activity">
    <reaction evidence="1">
        <text>[protein]-peptidylproline (omega=180) = [protein]-peptidylproline (omega=0)</text>
        <dbReference type="Rhea" id="RHEA:16237"/>
        <dbReference type="Rhea" id="RHEA-COMP:10747"/>
        <dbReference type="Rhea" id="RHEA-COMP:10748"/>
        <dbReference type="ChEBI" id="CHEBI:83833"/>
        <dbReference type="ChEBI" id="CHEBI:83834"/>
        <dbReference type="EC" id="5.2.1.8"/>
    </reaction>
</comment>
<comment type="subcellular location">
    <subcellularLocation>
        <location>Cytoplasm</location>
    </subcellularLocation>
    <text evidence="1">About half TF is bound to the ribosome near the polypeptide exit tunnel while the other half is free in the cytoplasm.</text>
</comment>
<comment type="domain">
    <text evidence="1">Consists of 3 domains; the N-terminus binds the ribosome, the middle domain has PPIase activity, while the C-terminus has intrinsic chaperone activity on its own.</text>
</comment>
<comment type="similarity">
    <text evidence="1">Belongs to the FKBP-type PPIase family. Tig subfamily.</text>
</comment>
<protein>
    <recommendedName>
        <fullName evidence="1">Trigger factor</fullName>
        <shortName evidence="1">TF</shortName>
        <ecNumber evidence="1">5.2.1.8</ecNumber>
    </recommendedName>
    <alternativeName>
        <fullName evidence="1">PPIase</fullName>
    </alternativeName>
</protein>
<gene>
    <name evidence="1" type="primary">tig</name>
    <name type="ordered locus">NE0030</name>
</gene>
<evidence type="ECO:0000255" key="1">
    <source>
        <dbReference type="HAMAP-Rule" id="MF_00303"/>
    </source>
</evidence>
<name>TIG_NITEU</name>
<organism>
    <name type="scientific">Nitrosomonas europaea (strain ATCC 19718 / CIP 103999 / KCTC 2705 / NBRC 14298)</name>
    <dbReference type="NCBI Taxonomy" id="228410"/>
    <lineage>
        <taxon>Bacteria</taxon>
        <taxon>Pseudomonadati</taxon>
        <taxon>Pseudomonadota</taxon>
        <taxon>Betaproteobacteria</taxon>
        <taxon>Nitrosomonadales</taxon>
        <taxon>Nitrosomonadaceae</taxon>
        <taxon>Nitrosomonas</taxon>
    </lineage>
</organism>
<keyword id="KW-0131">Cell cycle</keyword>
<keyword id="KW-0132">Cell division</keyword>
<keyword id="KW-0143">Chaperone</keyword>
<keyword id="KW-0963">Cytoplasm</keyword>
<keyword id="KW-0413">Isomerase</keyword>
<keyword id="KW-1185">Reference proteome</keyword>
<keyword id="KW-0697">Rotamase</keyword>
<accession>Q82Y58</accession>